<gene>
    <name evidence="1" type="primary">infA</name>
    <name type="ordered locus">Rfer_4222</name>
</gene>
<comment type="function">
    <text evidence="1">One of the essential components for the initiation of protein synthesis. Stabilizes the binding of IF-2 and IF-3 on the 30S subunit to which N-formylmethionyl-tRNA(fMet) subsequently binds. Helps modulate mRNA selection, yielding the 30S pre-initiation complex (PIC). Upon addition of the 50S ribosomal subunit IF-1, IF-2 and IF-3 are released leaving the mature 70S translation initiation complex.</text>
</comment>
<comment type="subunit">
    <text evidence="1">Component of the 30S ribosomal translation pre-initiation complex which assembles on the 30S ribosome in the order IF-2 and IF-3, IF-1 and N-formylmethionyl-tRNA(fMet); mRNA recruitment can occur at any time during PIC assembly.</text>
</comment>
<comment type="subcellular location">
    <subcellularLocation>
        <location evidence="1">Cytoplasm</location>
    </subcellularLocation>
</comment>
<comment type="similarity">
    <text evidence="1">Belongs to the IF-1 family.</text>
</comment>
<reference key="1">
    <citation type="submission" date="2006-02" db="EMBL/GenBank/DDBJ databases">
        <title>Complete sequence of chromosome of Rhodoferax ferrireducens DSM 15236.</title>
        <authorList>
            <person name="Copeland A."/>
            <person name="Lucas S."/>
            <person name="Lapidus A."/>
            <person name="Barry K."/>
            <person name="Detter J.C."/>
            <person name="Glavina del Rio T."/>
            <person name="Hammon N."/>
            <person name="Israni S."/>
            <person name="Pitluck S."/>
            <person name="Brettin T."/>
            <person name="Bruce D."/>
            <person name="Han C."/>
            <person name="Tapia R."/>
            <person name="Gilna P."/>
            <person name="Kiss H."/>
            <person name="Schmutz J."/>
            <person name="Larimer F."/>
            <person name="Land M."/>
            <person name="Kyrpides N."/>
            <person name="Ivanova N."/>
            <person name="Richardson P."/>
        </authorList>
    </citation>
    <scope>NUCLEOTIDE SEQUENCE [LARGE SCALE GENOMIC DNA]</scope>
    <source>
        <strain>ATCC BAA-621 / DSM 15236 / T118</strain>
    </source>
</reference>
<feature type="chain" id="PRO_0000263856" description="Translation initiation factor IF-1">
    <location>
        <begin position="1"/>
        <end position="72"/>
    </location>
</feature>
<feature type="domain" description="S1-like" evidence="1">
    <location>
        <begin position="1"/>
        <end position="72"/>
    </location>
</feature>
<proteinExistence type="inferred from homology"/>
<protein>
    <recommendedName>
        <fullName evidence="1">Translation initiation factor IF-1</fullName>
    </recommendedName>
</protein>
<evidence type="ECO:0000255" key="1">
    <source>
        <dbReference type="HAMAP-Rule" id="MF_00075"/>
    </source>
</evidence>
<keyword id="KW-0963">Cytoplasm</keyword>
<keyword id="KW-0396">Initiation factor</keyword>
<keyword id="KW-0648">Protein biosynthesis</keyword>
<keyword id="KW-1185">Reference proteome</keyword>
<keyword id="KW-0694">RNA-binding</keyword>
<keyword id="KW-0699">rRNA-binding</keyword>
<organism>
    <name type="scientific">Albidiferax ferrireducens (strain ATCC BAA-621 / DSM 15236 / T118)</name>
    <name type="common">Rhodoferax ferrireducens</name>
    <dbReference type="NCBI Taxonomy" id="338969"/>
    <lineage>
        <taxon>Bacteria</taxon>
        <taxon>Pseudomonadati</taxon>
        <taxon>Pseudomonadota</taxon>
        <taxon>Betaproteobacteria</taxon>
        <taxon>Burkholderiales</taxon>
        <taxon>Comamonadaceae</taxon>
        <taxon>Rhodoferax</taxon>
    </lineage>
</organism>
<dbReference type="EMBL" id="CP000267">
    <property type="protein sequence ID" value="ABD71909.1"/>
    <property type="molecule type" value="Genomic_DNA"/>
</dbReference>
<dbReference type="RefSeq" id="WP_007869286.1">
    <property type="nucleotide sequence ID" value="NC_007908.1"/>
</dbReference>
<dbReference type="SMR" id="Q21QP4"/>
<dbReference type="STRING" id="338969.Rfer_4222"/>
<dbReference type="GeneID" id="88097339"/>
<dbReference type="KEGG" id="rfr:Rfer_4222"/>
<dbReference type="eggNOG" id="COG0361">
    <property type="taxonomic scope" value="Bacteria"/>
</dbReference>
<dbReference type="HOGENOM" id="CLU_151267_1_0_4"/>
<dbReference type="OrthoDB" id="9803250at2"/>
<dbReference type="Proteomes" id="UP000008332">
    <property type="component" value="Chromosome"/>
</dbReference>
<dbReference type="GO" id="GO:0005829">
    <property type="term" value="C:cytosol"/>
    <property type="evidence" value="ECO:0007669"/>
    <property type="project" value="TreeGrafter"/>
</dbReference>
<dbReference type="GO" id="GO:0043022">
    <property type="term" value="F:ribosome binding"/>
    <property type="evidence" value="ECO:0007669"/>
    <property type="project" value="UniProtKB-UniRule"/>
</dbReference>
<dbReference type="GO" id="GO:0019843">
    <property type="term" value="F:rRNA binding"/>
    <property type="evidence" value="ECO:0007669"/>
    <property type="project" value="UniProtKB-UniRule"/>
</dbReference>
<dbReference type="GO" id="GO:0003743">
    <property type="term" value="F:translation initiation factor activity"/>
    <property type="evidence" value="ECO:0007669"/>
    <property type="project" value="UniProtKB-UniRule"/>
</dbReference>
<dbReference type="CDD" id="cd04451">
    <property type="entry name" value="S1_IF1"/>
    <property type="match status" value="1"/>
</dbReference>
<dbReference type="FunFam" id="2.40.50.140:FF:000002">
    <property type="entry name" value="Translation initiation factor IF-1"/>
    <property type="match status" value="1"/>
</dbReference>
<dbReference type="Gene3D" id="2.40.50.140">
    <property type="entry name" value="Nucleic acid-binding proteins"/>
    <property type="match status" value="1"/>
</dbReference>
<dbReference type="HAMAP" id="MF_00075">
    <property type="entry name" value="IF_1"/>
    <property type="match status" value="1"/>
</dbReference>
<dbReference type="InterPro" id="IPR012340">
    <property type="entry name" value="NA-bd_OB-fold"/>
</dbReference>
<dbReference type="InterPro" id="IPR006196">
    <property type="entry name" value="RNA-binding_domain_S1_IF1"/>
</dbReference>
<dbReference type="InterPro" id="IPR003029">
    <property type="entry name" value="S1_domain"/>
</dbReference>
<dbReference type="InterPro" id="IPR004368">
    <property type="entry name" value="TIF_IF1"/>
</dbReference>
<dbReference type="NCBIfam" id="TIGR00008">
    <property type="entry name" value="infA"/>
    <property type="match status" value="1"/>
</dbReference>
<dbReference type="PANTHER" id="PTHR33370">
    <property type="entry name" value="TRANSLATION INITIATION FACTOR IF-1, CHLOROPLASTIC"/>
    <property type="match status" value="1"/>
</dbReference>
<dbReference type="PANTHER" id="PTHR33370:SF1">
    <property type="entry name" value="TRANSLATION INITIATION FACTOR IF-1, CHLOROPLASTIC"/>
    <property type="match status" value="1"/>
</dbReference>
<dbReference type="Pfam" id="PF01176">
    <property type="entry name" value="eIF-1a"/>
    <property type="match status" value="1"/>
</dbReference>
<dbReference type="SMART" id="SM00316">
    <property type="entry name" value="S1"/>
    <property type="match status" value="1"/>
</dbReference>
<dbReference type="SUPFAM" id="SSF50249">
    <property type="entry name" value="Nucleic acid-binding proteins"/>
    <property type="match status" value="1"/>
</dbReference>
<dbReference type="PROSITE" id="PS50832">
    <property type="entry name" value="S1_IF1_TYPE"/>
    <property type="match status" value="1"/>
</dbReference>
<sequence length="72" mass="8220">MSKDDVIQMQGEVVENLPNATFRVKLENGHVVLGHISGKMRMHYIRILPGDKVTVELTPYDLSRARIVFRAK</sequence>
<name>IF1_ALBFT</name>
<accession>Q21QP4</accession>